<accession>P00064</accession>
<keyword id="KW-0007">Acetylation</keyword>
<keyword id="KW-0903">Direct protein sequencing</keyword>
<keyword id="KW-0249">Electron transport</keyword>
<keyword id="KW-0349">Heme</keyword>
<keyword id="KW-0379">Hydroxylation</keyword>
<keyword id="KW-0408">Iron</keyword>
<keyword id="KW-0479">Metal-binding</keyword>
<keyword id="KW-0488">Methylation</keyword>
<keyword id="KW-0496">Mitochondrion</keyword>
<keyword id="KW-0679">Respiratory chain</keyword>
<keyword id="KW-0813">Transport</keyword>
<sequence>ATFSZAPPGBZKAGQKIFKLKCAQCHTVEKGAGHKQGPNLNGLFGRQSGTAAGYSYSAANKNMAVVWZZBTLYDYLLNPKKYIPGTKMVFPGLKKPQDRADLIAYLKESTA</sequence>
<protein>
    <recommendedName>
        <fullName>Cytochrome c</fullName>
    </recommendedName>
</protein>
<name>CYC_ALLPO</name>
<organism>
    <name type="scientific">Allium porrum</name>
    <name type="common">Leek</name>
    <name type="synonym">Allium ampeloprasum var. porrum</name>
    <dbReference type="NCBI Taxonomy" id="4681"/>
    <lineage>
        <taxon>Eukaryota</taxon>
        <taxon>Viridiplantae</taxon>
        <taxon>Streptophyta</taxon>
        <taxon>Embryophyta</taxon>
        <taxon>Tracheophyta</taxon>
        <taxon>Spermatophyta</taxon>
        <taxon>Magnoliopsida</taxon>
        <taxon>Liliopsida</taxon>
        <taxon>Asparagales</taxon>
        <taxon>Amaryllidaceae</taxon>
        <taxon>Allioideae</taxon>
        <taxon>Allieae</taxon>
        <taxon>Allium</taxon>
    </lineage>
</organism>
<feature type="chain" id="PRO_0000108283" description="Cytochrome c">
    <location>
        <begin position="1"/>
        <end position="111"/>
    </location>
</feature>
<feature type="binding site" description="covalent" evidence="1 2">
    <location>
        <position position="22"/>
    </location>
    <ligand>
        <name>heme c</name>
        <dbReference type="ChEBI" id="CHEBI:61717"/>
    </ligand>
</feature>
<feature type="binding site" description="covalent" evidence="1 2">
    <location>
        <position position="25"/>
    </location>
    <ligand>
        <name>heme c</name>
        <dbReference type="ChEBI" id="CHEBI:61717"/>
    </ligand>
</feature>
<feature type="binding site" description="axial binding residue">
    <location>
        <position position="26"/>
    </location>
    <ligand>
        <name>heme c</name>
        <dbReference type="ChEBI" id="CHEBI:61717"/>
    </ligand>
    <ligandPart>
        <name>Fe</name>
        <dbReference type="ChEBI" id="CHEBI:18248"/>
    </ligandPart>
</feature>
<feature type="binding site" description="axial binding residue">
    <location>
        <position position="88"/>
    </location>
    <ligand>
        <name>heme c</name>
        <dbReference type="ChEBI" id="CHEBI:61717"/>
    </ligand>
    <ligandPart>
        <name>Fe</name>
        <dbReference type="ChEBI" id="CHEBI:18248"/>
    </ligandPart>
</feature>
<feature type="modified residue" description="N-acetylalanine" evidence="2">
    <location>
        <position position="1"/>
    </location>
</feature>
<feature type="modified residue" description="Hydroxyproline; partial" evidence="2">
    <location>
        <position position="79"/>
    </location>
</feature>
<feature type="modified residue" description="N6,N6,N6-trimethyllysine" evidence="2">
    <location>
        <position position="80"/>
    </location>
</feature>
<feature type="modified residue" description="N6,N6,N6-trimethyllysine" evidence="2">
    <location>
        <position position="94"/>
    </location>
</feature>
<evidence type="ECO:0000255" key="1">
    <source>
        <dbReference type="PROSITE-ProRule" id="PRU00433"/>
    </source>
</evidence>
<evidence type="ECO:0000269" key="2">
    <source>
    </source>
</evidence>
<evidence type="ECO:0000305" key="3"/>
<reference key="1">
    <citation type="journal article" date="1973" name="Biochem. J.">
        <title>The amino acid sequence of cytochrome c from Allium porrum L. (leek).</title>
        <authorList>
            <person name="Brown R.H."/>
            <person name="Boulter D."/>
        </authorList>
    </citation>
    <scope>PROTEIN SEQUENCE</scope>
    <scope>ACETYLATION AT ALA-1</scope>
    <scope>HYDROXYLATION AT PRO-79</scope>
    <scope>METHYLATION AT LYS-80 AND LYS-94</scope>
</reference>
<comment type="function">
    <text>Electron carrier protein. The oxidized form of the cytochrome c heme group can accept an electron from the heme group of the cytochrome c1 subunit of cytochrome reductase. Cytochrome c then transfers this electron to the cytochrome oxidase complex, the final protein carrier in the mitochondrial electron-transport chain.</text>
</comment>
<comment type="subcellular location">
    <subcellularLocation>
        <location>Mitochondrion intermembrane space</location>
    </subcellularLocation>
    <text>Loosely associated with the inner membrane.</text>
</comment>
<comment type="PTM">
    <text>Binds 1 heme c group covalently per subunit.</text>
</comment>
<comment type="PTM">
    <text evidence="2">It is not sure whether methylation is on Lys-80 or Lys-81.</text>
</comment>
<comment type="miscellaneous">
    <text>There are amides at two of the three positions 5, 10, and 11 and at one of the three positions 68, 69, and 70.</text>
</comment>
<comment type="similarity">
    <text evidence="3">Belongs to the cytochrome c family.</text>
</comment>
<comment type="online information" name="Protein Spotlight">
    <link uri="https://www.proteinspotlight.org/back_issues/076"/>
    <text>Life shuttle - Issue 76 of November 2006</text>
</comment>
<dbReference type="PIR" id="A00056">
    <property type="entry name" value="CCLK"/>
</dbReference>
<dbReference type="iPTMnet" id="P00064"/>
<dbReference type="GO" id="GO:0005758">
    <property type="term" value="C:mitochondrial intermembrane space"/>
    <property type="evidence" value="ECO:0007669"/>
    <property type="project" value="UniProtKB-SubCell"/>
</dbReference>
<dbReference type="GO" id="GO:0009055">
    <property type="term" value="F:electron transfer activity"/>
    <property type="evidence" value="ECO:0007669"/>
    <property type="project" value="InterPro"/>
</dbReference>
<dbReference type="GO" id="GO:0020037">
    <property type="term" value="F:heme binding"/>
    <property type="evidence" value="ECO:0007669"/>
    <property type="project" value="InterPro"/>
</dbReference>
<dbReference type="GO" id="GO:0046872">
    <property type="term" value="F:metal ion binding"/>
    <property type="evidence" value="ECO:0007669"/>
    <property type="project" value="UniProtKB-KW"/>
</dbReference>
<dbReference type="FunFam" id="1.10.760.10:FF:000001">
    <property type="entry name" value="Cytochrome c iso-1"/>
    <property type="match status" value="1"/>
</dbReference>
<dbReference type="Gene3D" id="1.10.760.10">
    <property type="entry name" value="Cytochrome c-like domain"/>
    <property type="match status" value="1"/>
</dbReference>
<dbReference type="InterPro" id="IPR009056">
    <property type="entry name" value="Cyt_c-like_dom"/>
</dbReference>
<dbReference type="InterPro" id="IPR036909">
    <property type="entry name" value="Cyt_c-like_dom_sf"/>
</dbReference>
<dbReference type="InterPro" id="IPR002327">
    <property type="entry name" value="Cyt_c_1A/1B"/>
</dbReference>
<dbReference type="PANTHER" id="PTHR11961">
    <property type="entry name" value="CYTOCHROME C"/>
    <property type="match status" value="1"/>
</dbReference>
<dbReference type="Pfam" id="PF00034">
    <property type="entry name" value="Cytochrom_C"/>
    <property type="match status" value="1"/>
</dbReference>
<dbReference type="PRINTS" id="PR00604">
    <property type="entry name" value="CYTCHRMECIAB"/>
</dbReference>
<dbReference type="SUPFAM" id="SSF46626">
    <property type="entry name" value="Cytochrome c"/>
    <property type="match status" value="1"/>
</dbReference>
<dbReference type="PROSITE" id="PS51007">
    <property type="entry name" value="CYTC"/>
    <property type="match status" value="1"/>
</dbReference>
<proteinExistence type="evidence at protein level"/>